<gene>
    <name type="ordered locus">Rfer_3873</name>
</gene>
<comment type="similarity">
    <text evidence="1">Belongs to the UPF0102 family.</text>
</comment>
<reference key="1">
    <citation type="submission" date="2006-02" db="EMBL/GenBank/DDBJ databases">
        <title>Complete sequence of chromosome of Rhodoferax ferrireducens DSM 15236.</title>
        <authorList>
            <person name="Copeland A."/>
            <person name="Lucas S."/>
            <person name="Lapidus A."/>
            <person name="Barry K."/>
            <person name="Detter J.C."/>
            <person name="Glavina del Rio T."/>
            <person name="Hammon N."/>
            <person name="Israni S."/>
            <person name="Pitluck S."/>
            <person name="Brettin T."/>
            <person name="Bruce D."/>
            <person name="Han C."/>
            <person name="Tapia R."/>
            <person name="Gilna P."/>
            <person name="Kiss H."/>
            <person name="Schmutz J."/>
            <person name="Larimer F."/>
            <person name="Land M."/>
            <person name="Kyrpides N."/>
            <person name="Ivanova N."/>
            <person name="Richardson P."/>
        </authorList>
    </citation>
    <scope>NUCLEOTIDE SEQUENCE [LARGE SCALE GENOMIC DNA]</scope>
    <source>
        <strain>ATCC BAA-621 / DSM 15236 / T118</strain>
    </source>
</reference>
<name>Y3873_ALBFT</name>
<dbReference type="EMBL" id="CP000267">
    <property type="protein sequence ID" value="ABD71572.1"/>
    <property type="molecule type" value="Genomic_DNA"/>
</dbReference>
<dbReference type="RefSeq" id="WP_011466135.1">
    <property type="nucleotide sequence ID" value="NC_007908.1"/>
</dbReference>
<dbReference type="SMR" id="Q21RN1"/>
<dbReference type="STRING" id="338969.Rfer_3873"/>
<dbReference type="KEGG" id="rfr:Rfer_3873"/>
<dbReference type="eggNOG" id="COG0792">
    <property type="taxonomic scope" value="Bacteria"/>
</dbReference>
<dbReference type="HOGENOM" id="CLU_115353_1_0_4"/>
<dbReference type="OrthoDB" id="9794876at2"/>
<dbReference type="Proteomes" id="UP000008332">
    <property type="component" value="Chromosome"/>
</dbReference>
<dbReference type="GO" id="GO:0003676">
    <property type="term" value="F:nucleic acid binding"/>
    <property type="evidence" value="ECO:0007669"/>
    <property type="project" value="InterPro"/>
</dbReference>
<dbReference type="Gene3D" id="3.40.1350.10">
    <property type="match status" value="1"/>
</dbReference>
<dbReference type="HAMAP" id="MF_00048">
    <property type="entry name" value="UPF0102"/>
    <property type="match status" value="1"/>
</dbReference>
<dbReference type="InterPro" id="IPR011335">
    <property type="entry name" value="Restrct_endonuc-II-like"/>
</dbReference>
<dbReference type="InterPro" id="IPR011856">
    <property type="entry name" value="tRNA_endonuc-like_dom_sf"/>
</dbReference>
<dbReference type="InterPro" id="IPR003509">
    <property type="entry name" value="UPF0102_YraN-like"/>
</dbReference>
<dbReference type="NCBIfam" id="NF009150">
    <property type="entry name" value="PRK12497.1-3"/>
    <property type="match status" value="1"/>
</dbReference>
<dbReference type="NCBIfam" id="TIGR00252">
    <property type="entry name" value="YraN family protein"/>
    <property type="match status" value="1"/>
</dbReference>
<dbReference type="PANTHER" id="PTHR34039">
    <property type="entry name" value="UPF0102 PROTEIN YRAN"/>
    <property type="match status" value="1"/>
</dbReference>
<dbReference type="PANTHER" id="PTHR34039:SF1">
    <property type="entry name" value="UPF0102 PROTEIN YRAN"/>
    <property type="match status" value="1"/>
</dbReference>
<dbReference type="Pfam" id="PF02021">
    <property type="entry name" value="UPF0102"/>
    <property type="match status" value="1"/>
</dbReference>
<dbReference type="SUPFAM" id="SSF52980">
    <property type="entry name" value="Restriction endonuclease-like"/>
    <property type="match status" value="1"/>
</dbReference>
<accession>Q21RN1</accession>
<proteinExistence type="inferred from homology"/>
<keyword id="KW-1185">Reference proteome</keyword>
<sequence length="128" mass="14070">MAIPQIKTQVGTSKQAGDAAEESALRHLQQAGLRLLQRNYRTPGRGGGEIDLIMRAPDGTTVFVEVRQRANASHGGAAASISVTKQRRIIFAARHYLMRLREPPPCRFDVVTLECGVIQWLQAAFEAC</sequence>
<protein>
    <recommendedName>
        <fullName evidence="1">UPF0102 protein Rfer_3873</fullName>
    </recommendedName>
</protein>
<organism>
    <name type="scientific">Albidiferax ferrireducens (strain ATCC BAA-621 / DSM 15236 / T118)</name>
    <name type="common">Rhodoferax ferrireducens</name>
    <dbReference type="NCBI Taxonomy" id="338969"/>
    <lineage>
        <taxon>Bacteria</taxon>
        <taxon>Pseudomonadati</taxon>
        <taxon>Pseudomonadota</taxon>
        <taxon>Betaproteobacteria</taxon>
        <taxon>Burkholderiales</taxon>
        <taxon>Comamonadaceae</taxon>
        <taxon>Rhodoferax</taxon>
    </lineage>
</organism>
<evidence type="ECO:0000255" key="1">
    <source>
        <dbReference type="HAMAP-Rule" id="MF_00048"/>
    </source>
</evidence>
<evidence type="ECO:0000256" key="2">
    <source>
        <dbReference type="SAM" id="MobiDB-lite"/>
    </source>
</evidence>
<feature type="chain" id="PRO_1000009250" description="UPF0102 protein Rfer_3873">
    <location>
        <begin position="1"/>
        <end position="128"/>
    </location>
</feature>
<feature type="region of interest" description="Disordered" evidence="2">
    <location>
        <begin position="1"/>
        <end position="20"/>
    </location>
</feature>
<feature type="compositionally biased region" description="Polar residues" evidence="2">
    <location>
        <begin position="1"/>
        <end position="15"/>
    </location>
</feature>